<feature type="chain" id="PRO_0000194390" description="Putative adenosine/adenine deaminase">
    <location>
        <begin position="1"/>
        <end position="343"/>
    </location>
</feature>
<feature type="active site" description="Proton donor" evidence="2">
    <location>
        <position position="207"/>
    </location>
</feature>
<feature type="binding site" evidence="1">
    <location>
        <position position="16"/>
    </location>
    <ligand>
        <name>Zn(2+)</name>
        <dbReference type="ChEBI" id="CHEBI:29105"/>
        <note>catalytic</note>
    </ligand>
</feature>
<feature type="binding site" evidence="1">
    <location>
        <position position="18"/>
    </location>
    <ligand>
        <name>substrate</name>
    </ligand>
</feature>
<feature type="binding site" evidence="1">
    <location>
        <position position="18"/>
    </location>
    <ligand>
        <name>Zn(2+)</name>
        <dbReference type="ChEBI" id="CHEBI:29105"/>
        <note>catalytic</note>
    </ligand>
</feature>
<feature type="binding site" evidence="1">
    <location>
        <position position="204"/>
    </location>
    <ligand>
        <name>Zn(2+)</name>
        <dbReference type="ChEBI" id="CHEBI:29105"/>
        <note>catalytic</note>
    </ligand>
</feature>
<feature type="binding site" evidence="1">
    <location>
        <position position="285"/>
    </location>
    <ligand>
        <name>Zn(2+)</name>
        <dbReference type="ChEBI" id="CHEBI:29105"/>
        <note>catalytic</note>
    </ligand>
</feature>
<feature type="binding site" evidence="1">
    <location>
        <position position="286"/>
    </location>
    <ligand>
        <name>substrate</name>
    </ligand>
</feature>
<feature type="site" description="Important for catalytic activity" evidence="1">
    <location>
        <position position="228"/>
    </location>
</feature>
<protein>
    <recommendedName>
        <fullName>Putative adenosine/adenine deaminase</fullName>
        <ecNumber>3.5.4.-</ecNumber>
    </recommendedName>
    <alternativeName>
        <fullName>Adenosine aminohydrolase</fullName>
    </alternativeName>
</protein>
<organism>
    <name type="scientific">Streptomyces coelicolor (strain ATCC BAA-471 / A3(2) / M145)</name>
    <dbReference type="NCBI Taxonomy" id="100226"/>
    <lineage>
        <taxon>Bacteria</taxon>
        <taxon>Bacillati</taxon>
        <taxon>Actinomycetota</taxon>
        <taxon>Actinomycetes</taxon>
        <taxon>Kitasatosporales</taxon>
        <taxon>Streptomycetaceae</taxon>
        <taxon>Streptomyces</taxon>
        <taxon>Streptomyces albidoflavus group</taxon>
    </lineage>
</organism>
<accession>Q9L0L6</accession>
<name>ADDL_STRCO</name>
<dbReference type="EC" id="3.5.4.-"/>
<dbReference type="EMBL" id="AL939120">
    <property type="protein sequence ID" value="CAB77418.1"/>
    <property type="molecule type" value="Genomic_DNA"/>
</dbReference>
<dbReference type="RefSeq" id="NP_628805.1">
    <property type="nucleotide sequence ID" value="NC_003888.3"/>
</dbReference>
<dbReference type="RefSeq" id="WP_003974319.1">
    <property type="nucleotide sequence ID" value="NZ_VNID01000028.1"/>
</dbReference>
<dbReference type="SMR" id="Q9L0L6"/>
<dbReference type="STRING" id="100226.gene:17762292"/>
<dbReference type="PaxDb" id="100226-SCO4644"/>
<dbReference type="DNASU" id="1100085"/>
<dbReference type="KEGG" id="sco:SCO4644"/>
<dbReference type="PATRIC" id="fig|100226.15.peg.4715"/>
<dbReference type="eggNOG" id="COG1816">
    <property type="taxonomic scope" value="Bacteria"/>
</dbReference>
<dbReference type="HOGENOM" id="CLU_039228_7_1_11"/>
<dbReference type="InParanoid" id="Q9L0L6"/>
<dbReference type="OrthoDB" id="105475at2"/>
<dbReference type="PhylomeDB" id="Q9L0L6"/>
<dbReference type="Proteomes" id="UP000001973">
    <property type="component" value="Chromosome"/>
</dbReference>
<dbReference type="GO" id="GO:0019239">
    <property type="term" value="F:deaminase activity"/>
    <property type="evidence" value="ECO:0007669"/>
    <property type="project" value="InterPro"/>
</dbReference>
<dbReference type="GO" id="GO:0016814">
    <property type="term" value="F:hydrolase activity, acting on carbon-nitrogen (but not peptide) bonds, in cyclic amidines"/>
    <property type="evidence" value="ECO:0007669"/>
    <property type="project" value="UniProtKB-ARBA"/>
</dbReference>
<dbReference type="GO" id="GO:0046872">
    <property type="term" value="F:metal ion binding"/>
    <property type="evidence" value="ECO:0007669"/>
    <property type="project" value="UniProtKB-KW"/>
</dbReference>
<dbReference type="GO" id="GO:0009117">
    <property type="term" value="P:nucleotide metabolic process"/>
    <property type="evidence" value="ECO:0007669"/>
    <property type="project" value="UniProtKB-KW"/>
</dbReference>
<dbReference type="GO" id="GO:0009168">
    <property type="term" value="P:purine ribonucleoside monophosphate biosynthetic process"/>
    <property type="evidence" value="ECO:0007669"/>
    <property type="project" value="InterPro"/>
</dbReference>
<dbReference type="CDD" id="cd01320">
    <property type="entry name" value="ADA"/>
    <property type="match status" value="1"/>
</dbReference>
<dbReference type="FunFam" id="3.20.20.140:FF:000062">
    <property type="entry name" value="Adenosine deaminase"/>
    <property type="match status" value="1"/>
</dbReference>
<dbReference type="Gene3D" id="3.20.20.140">
    <property type="entry name" value="Metal-dependent hydrolases"/>
    <property type="match status" value="1"/>
</dbReference>
<dbReference type="InterPro" id="IPR006650">
    <property type="entry name" value="A/AMP_deam_AS"/>
</dbReference>
<dbReference type="InterPro" id="IPR001365">
    <property type="entry name" value="A_deaminase_dom"/>
</dbReference>
<dbReference type="InterPro" id="IPR006330">
    <property type="entry name" value="Ado/ade_deaminase"/>
</dbReference>
<dbReference type="InterPro" id="IPR032466">
    <property type="entry name" value="Metal_Hydrolase"/>
</dbReference>
<dbReference type="NCBIfam" id="TIGR01430">
    <property type="entry name" value="aden_deam"/>
    <property type="match status" value="1"/>
</dbReference>
<dbReference type="NCBIfam" id="NF006849">
    <property type="entry name" value="PRK09358.1-5"/>
    <property type="match status" value="1"/>
</dbReference>
<dbReference type="PANTHER" id="PTHR43114">
    <property type="entry name" value="ADENINE DEAMINASE"/>
    <property type="match status" value="1"/>
</dbReference>
<dbReference type="PANTHER" id="PTHR43114:SF6">
    <property type="entry name" value="ADENINE DEAMINASE"/>
    <property type="match status" value="1"/>
</dbReference>
<dbReference type="Pfam" id="PF00962">
    <property type="entry name" value="A_deaminase"/>
    <property type="match status" value="1"/>
</dbReference>
<dbReference type="SUPFAM" id="SSF51556">
    <property type="entry name" value="Metallo-dependent hydrolases"/>
    <property type="match status" value="1"/>
</dbReference>
<dbReference type="PROSITE" id="PS00485">
    <property type="entry name" value="A_DEAMINASE"/>
    <property type="match status" value="1"/>
</dbReference>
<evidence type="ECO:0000250" key="1"/>
<evidence type="ECO:0000255" key="2">
    <source>
        <dbReference type="PROSITE-ProRule" id="PRU10104"/>
    </source>
</evidence>
<evidence type="ECO:0000305" key="3"/>
<gene>
    <name type="ordered locus">SCO4644</name>
    <name type="ORF">SCD82.15c</name>
</gene>
<comment type="function">
    <text evidence="1">Putative nucleoside deaminase. May catalyze the hydrolytic deamination of adenosine or some similar substrate and play a role in purine metabolism (By similarity).</text>
</comment>
<comment type="cofactor">
    <cofactor evidence="1">
        <name>Zn(2+)</name>
        <dbReference type="ChEBI" id="CHEBI:29105"/>
    </cofactor>
    <text evidence="1">Binds 1 zinc ion per subunit.</text>
</comment>
<comment type="similarity">
    <text evidence="3">Belongs to the metallo-dependent hydrolases superfamily. Adenosine and AMP deaminases family.</text>
</comment>
<sequence length="343" mass="37673">MERVRDVSELPKAHLHLHFTGSMRPTTLLELADKHGVRLPETLTEALGRGESPKLRATDERGWFRFQRLYDAARSCLQTPEDIQRLVREAAEEDLRDGSGWLEIQVDPTSYAPRLGGLIPALEIILDAVETTVRDTGIGMRVLVAANRMKHPLDARTLARLAVRYAERGVVGFGLSNDERRGMARDFDRAFAIARDGGLLSAPHGGELTGPASVRDCLDDLEADRIGHGVRAAEDPRLLKRLADRQVTCEVCPASNVALGVYEKPEDVPLRRLFEAGVPMALGADDPLLFGSRLAAQYEIAREHHGFTDAELAELARQSVRGSAAPEEVKGKLLAGVDDWLVA</sequence>
<reference key="1">
    <citation type="journal article" date="2002" name="Nature">
        <title>Complete genome sequence of the model actinomycete Streptomyces coelicolor A3(2).</title>
        <authorList>
            <person name="Bentley S.D."/>
            <person name="Chater K.F."/>
            <person name="Cerdeno-Tarraga A.-M."/>
            <person name="Challis G.L."/>
            <person name="Thomson N.R."/>
            <person name="James K.D."/>
            <person name="Harris D.E."/>
            <person name="Quail M.A."/>
            <person name="Kieser H."/>
            <person name="Harper D."/>
            <person name="Bateman A."/>
            <person name="Brown S."/>
            <person name="Chandra G."/>
            <person name="Chen C.W."/>
            <person name="Collins M."/>
            <person name="Cronin A."/>
            <person name="Fraser A."/>
            <person name="Goble A."/>
            <person name="Hidalgo J."/>
            <person name="Hornsby T."/>
            <person name="Howarth S."/>
            <person name="Huang C.-H."/>
            <person name="Kieser T."/>
            <person name="Larke L."/>
            <person name="Murphy L.D."/>
            <person name="Oliver K."/>
            <person name="O'Neil S."/>
            <person name="Rabbinowitsch E."/>
            <person name="Rajandream M.A."/>
            <person name="Rutherford K.M."/>
            <person name="Rutter S."/>
            <person name="Seeger K."/>
            <person name="Saunders D."/>
            <person name="Sharp S."/>
            <person name="Squares R."/>
            <person name="Squares S."/>
            <person name="Taylor K."/>
            <person name="Warren T."/>
            <person name="Wietzorrek A."/>
            <person name="Woodward J.R."/>
            <person name="Barrell B.G."/>
            <person name="Parkhill J."/>
            <person name="Hopwood D.A."/>
        </authorList>
    </citation>
    <scope>NUCLEOTIDE SEQUENCE [LARGE SCALE GENOMIC DNA]</scope>
    <source>
        <strain>ATCC BAA-471 / A3(2) / M145</strain>
    </source>
</reference>
<keyword id="KW-0378">Hydrolase</keyword>
<keyword id="KW-0479">Metal-binding</keyword>
<keyword id="KW-0546">Nucleotide metabolism</keyword>
<keyword id="KW-1185">Reference proteome</keyword>
<keyword id="KW-0862">Zinc</keyword>
<proteinExistence type="inferred from homology"/>